<dbReference type="EC" id="4.2.1.8"/>
<dbReference type="EMBL" id="Z49961">
    <property type="protein sequence ID" value="CAA90233.1"/>
    <property type="molecule type" value="Genomic_DNA"/>
</dbReference>
<dbReference type="SMR" id="Q60040"/>
<dbReference type="OMA" id="ANHLEGD"/>
<dbReference type="UniPathway" id="UPA00246"/>
<dbReference type="GO" id="GO:0008198">
    <property type="term" value="F:ferrous iron binding"/>
    <property type="evidence" value="ECO:0007669"/>
    <property type="project" value="TreeGrafter"/>
</dbReference>
<dbReference type="GO" id="GO:0030145">
    <property type="term" value="F:manganese ion binding"/>
    <property type="evidence" value="ECO:0007669"/>
    <property type="project" value="TreeGrafter"/>
</dbReference>
<dbReference type="GO" id="GO:0008927">
    <property type="term" value="F:mannonate dehydratase activity"/>
    <property type="evidence" value="ECO:0007669"/>
    <property type="project" value="UniProtKB-UniRule"/>
</dbReference>
<dbReference type="GO" id="GO:0042840">
    <property type="term" value="P:D-glucuronate catabolic process"/>
    <property type="evidence" value="ECO:0007669"/>
    <property type="project" value="TreeGrafter"/>
</dbReference>
<dbReference type="Gene3D" id="3.20.20.150">
    <property type="entry name" value="Divalent-metal-dependent TIM barrel enzymes"/>
    <property type="match status" value="1"/>
</dbReference>
<dbReference type="HAMAP" id="MF_00106">
    <property type="entry name" value="UxuA"/>
    <property type="match status" value="1"/>
</dbReference>
<dbReference type="InterPro" id="IPR004628">
    <property type="entry name" value="Man_deHydtase"/>
</dbReference>
<dbReference type="InterPro" id="IPR036237">
    <property type="entry name" value="Xyl_isomerase-like_sf"/>
</dbReference>
<dbReference type="NCBIfam" id="NF003027">
    <property type="entry name" value="PRK03906.1"/>
    <property type="match status" value="1"/>
</dbReference>
<dbReference type="NCBIfam" id="TIGR00695">
    <property type="entry name" value="uxuA"/>
    <property type="match status" value="1"/>
</dbReference>
<dbReference type="PANTHER" id="PTHR30387">
    <property type="entry name" value="MANNONATE DEHYDRATASE"/>
    <property type="match status" value="1"/>
</dbReference>
<dbReference type="PANTHER" id="PTHR30387:SF2">
    <property type="entry name" value="MANNONATE DEHYDRATASE"/>
    <property type="match status" value="1"/>
</dbReference>
<dbReference type="Pfam" id="PF03786">
    <property type="entry name" value="UxuA"/>
    <property type="match status" value="1"/>
</dbReference>
<dbReference type="PIRSF" id="PIRSF016049">
    <property type="entry name" value="Man_dehyd"/>
    <property type="match status" value="1"/>
</dbReference>
<dbReference type="SUPFAM" id="SSF51658">
    <property type="entry name" value="Xylose isomerase-like"/>
    <property type="match status" value="1"/>
</dbReference>
<keyword id="KW-0408">Iron</keyword>
<keyword id="KW-0456">Lyase</keyword>
<keyword id="KW-0464">Manganese</keyword>
<feature type="chain" id="PRO_0000170690" description="Mannonate dehydratase">
    <location>
        <begin position="1"/>
        <end position="360"/>
    </location>
</feature>
<sequence length="360" mass="41723">MKLVFRWFGEKHDTVTLEQIRQIPGVEGVVGALFDIPVGEVWPLEEIMKLKETVERAGLKLEVIESVNVHEDIKLGLPTRDRYIENYKETIRNLAKAGVKVVCYNFMPVFDWMRTDLHKKLPDGSETMEYDHSLIEGVTPDELIERVKEGSEGFVLPGWEWDRLEKLRETFELYKNVDEEKLFENLVYFLERVIPVCEECDVKLAIHPDDPPWSIFGLPRIITNKENIERLLKAVDSPYNGITLCMGSLGANPENNIPEMIRYFGKMGRIHFAHVRNLKFTGEKSFYETAHPSFCGSHDLFEVMKAFHDIGYEGYIRPDHGRLIWGEKARPGYGLYDRALGATYILGLWEAISKMKERYC</sequence>
<proteinExistence type="inferred from homology"/>
<name>UXUA_THENE</name>
<gene>
    <name type="primary">uxuA</name>
</gene>
<reference key="1">
    <citation type="submission" date="1995-12" db="EMBL/GenBank/DDBJ databases">
        <authorList>
            <person name="Zverlov V."/>
            <person name="Piotukh K."/>
            <person name="Velikodvorskaja G."/>
            <person name="Goetz F."/>
            <person name="Borriss R."/>
        </authorList>
    </citation>
    <scope>NUCLEOTIDE SEQUENCE [GENOMIC DNA]</scope>
    <source>
        <strain>Z2706-MC24</strain>
    </source>
</reference>
<protein>
    <recommendedName>
        <fullName>Mannonate dehydratase</fullName>
        <ecNumber>4.2.1.8</ecNumber>
    </recommendedName>
    <alternativeName>
        <fullName>D-mannonate hydro-lyase</fullName>
    </alternativeName>
</protein>
<evidence type="ECO:0000250" key="1"/>
<evidence type="ECO:0000305" key="2"/>
<comment type="function">
    <text evidence="1">Catalyzes the dehydration of D-mannonate.</text>
</comment>
<comment type="catalytic activity">
    <reaction>
        <text>D-mannonate = 2-dehydro-3-deoxy-D-gluconate + H2O</text>
        <dbReference type="Rhea" id="RHEA:20097"/>
        <dbReference type="ChEBI" id="CHEBI:15377"/>
        <dbReference type="ChEBI" id="CHEBI:17767"/>
        <dbReference type="ChEBI" id="CHEBI:57990"/>
        <dbReference type="EC" id="4.2.1.8"/>
    </reaction>
</comment>
<comment type="cofactor">
    <cofactor evidence="1">
        <name>Fe(2+)</name>
        <dbReference type="ChEBI" id="CHEBI:29033"/>
    </cofactor>
    <cofactor evidence="1">
        <name>Mn(2+)</name>
        <dbReference type="ChEBI" id="CHEBI:29035"/>
    </cofactor>
</comment>
<comment type="pathway">
    <text>Carbohydrate metabolism; pentose and glucuronate interconversion.</text>
</comment>
<comment type="similarity">
    <text evidence="2">Belongs to the mannonate dehydratase family.</text>
</comment>
<accession>Q60040</accession>
<organism>
    <name type="scientific">Thermotoga neapolitana</name>
    <dbReference type="NCBI Taxonomy" id="2337"/>
    <lineage>
        <taxon>Bacteria</taxon>
        <taxon>Thermotogati</taxon>
        <taxon>Thermotogota</taxon>
        <taxon>Thermotogae</taxon>
        <taxon>Thermotogales</taxon>
        <taxon>Thermotogaceae</taxon>
        <taxon>Thermotoga</taxon>
    </lineage>
</organism>